<reference key="1">
    <citation type="journal article" date="2007" name="Genome Res.">
        <title>Reductive evolution and niche adaptation inferred from the genome of Mycobacterium ulcerans, the causative agent of Buruli ulcer.</title>
        <authorList>
            <person name="Stinear T.P."/>
            <person name="Seemann T."/>
            <person name="Pidot S."/>
            <person name="Frigui W."/>
            <person name="Reysset G."/>
            <person name="Garnier T."/>
            <person name="Meurice G."/>
            <person name="Simon D."/>
            <person name="Bouchier C."/>
            <person name="Ma L."/>
            <person name="Tichit M."/>
            <person name="Porter J.L."/>
            <person name="Ryan J."/>
            <person name="Johnson P.D.R."/>
            <person name="Davies J.K."/>
            <person name="Jenkin G.A."/>
            <person name="Small P.L.C."/>
            <person name="Jones L.M."/>
            <person name="Tekaia F."/>
            <person name="Laval F."/>
            <person name="Daffe M."/>
            <person name="Parkhill J."/>
            <person name="Cole S.T."/>
        </authorList>
    </citation>
    <scope>NUCLEOTIDE SEQUENCE [LARGE SCALE GENOMIC DNA]</scope>
    <source>
        <strain>Agy99</strain>
    </source>
</reference>
<accession>A0PMV4</accession>
<proteinExistence type="inferred from homology"/>
<comment type="function">
    <text evidence="1">Functions in the biosynthesis of branched-chain amino acids. Catalyzes the dehydration of (2R,3R)-2,3-dihydroxy-3-methylpentanoate (2,3-dihydroxy-3-methylvalerate) into 2-oxo-3-methylpentanoate (2-oxo-3-methylvalerate) and of (2R)-2,3-dihydroxy-3-methylbutanoate (2,3-dihydroxyisovalerate) into 2-oxo-3-methylbutanoate (2-oxoisovalerate), the penultimate precursor to L-isoleucine and L-valine, respectively.</text>
</comment>
<comment type="catalytic activity">
    <reaction evidence="1">
        <text>(2R)-2,3-dihydroxy-3-methylbutanoate = 3-methyl-2-oxobutanoate + H2O</text>
        <dbReference type="Rhea" id="RHEA:24809"/>
        <dbReference type="ChEBI" id="CHEBI:11851"/>
        <dbReference type="ChEBI" id="CHEBI:15377"/>
        <dbReference type="ChEBI" id="CHEBI:49072"/>
        <dbReference type="EC" id="4.2.1.9"/>
    </reaction>
    <physiologicalReaction direction="left-to-right" evidence="1">
        <dbReference type="Rhea" id="RHEA:24810"/>
    </physiologicalReaction>
</comment>
<comment type="catalytic activity">
    <reaction evidence="1">
        <text>(2R,3R)-2,3-dihydroxy-3-methylpentanoate = (S)-3-methyl-2-oxopentanoate + H2O</text>
        <dbReference type="Rhea" id="RHEA:27694"/>
        <dbReference type="ChEBI" id="CHEBI:15377"/>
        <dbReference type="ChEBI" id="CHEBI:35146"/>
        <dbReference type="ChEBI" id="CHEBI:49258"/>
        <dbReference type="EC" id="4.2.1.9"/>
    </reaction>
    <physiologicalReaction direction="left-to-right" evidence="1">
        <dbReference type="Rhea" id="RHEA:27695"/>
    </physiologicalReaction>
</comment>
<comment type="cofactor">
    <cofactor evidence="1">
        <name>[2Fe-2S] cluster</name>
        <dbReference type="ChEBI" id="CHEBI:190135"/>
    </cofactor>
    <text evidence="1">Binds 1 [2Fe-2S] cluster per subunit. This cluster acts as a Lewis acid cofactor.</text>
</comment>
<comment type="cofactor">
    <cofactor evidence="1">
        <name>Mg(2+)</name>
        <dbReference type="ChEBI" id="CHEBI:18420"/>
    </cofactor>
</comment>
<comment type="pathway">
    <text evidence="1">Amino-acid biosynthesis; L-isoleucine biosynthesis; L-isoleucine from 2-oxobutanoate: step 3/4.</text>
</comment>
<comment type="pathway">
    <text evidence="1">Amino-acid biosynthesis; L-valine biosynthesis; L-valine from pyruvate: step 3/4.</text>
</comment>
<comment type="subunit">
    <text evidence="1">Homodimer.</text>
</comment>
<comment type="similarity">
    <text evidence="1">Belongs to the IlvD/Edd family.</text>
</comment>
<feature type="chain" id="PRO_0000321599" description="Dihydroxy-acid dehydratase">
    <location>
        <begin position="1"/>
        <end position="564"/>
    </location>
</feature>
<feature type="active site" description="Proton acceptor" evidence="1">
    <location>
        <position position="480"/>
    </location>
</feature>
<feature type="binding site" evidence="1">
    <location>
        <position position="53"/>
    </location>
    <ligand>
        <name>[2Fe-2S] cluster</name>
        <dbReference type="ChEBI" id="CHEBI:190135"/>
    </ligand>
</feature>
<feature type="binding site" evidence="1">
    <location>
        <position position="85"/>
    </location>
    <ligand>
        <name>Mg(2+)</name>
        <dbReference type="ChEBI" id="CHEBI:18420"/>
    </ligand>
</feature>
<feature type="binding site" evidence="1">
    <location>
        <position position="126"/>
    </location>
    <ligand>
        <name>[2Fe-2S] cluster</name>
        <dbReference type="ChEBI" id="CHEBI:190135"/>
    </ligand>
</feature>
<feature type="binding site" evidence="1">
    <location>
        <position position="127"/>
    </location>
    <ligand>
        <name>Mg(2+)</name>
        <dbReference type="ChEBI" id="CHEBI:18420"/>
    </ligand>
</feature>
<feature type="binding site" description="via carbamate group" evidence="1">
    <location>
        <position position="128"/>
    </location>
    <ligand>
        <name>Mg(2+)</name>
        <dbReference type="ChEBI" id="CHEBI:18420"/>
    </ligand>
</feature>
<feature type="binding site" evidence="1">
    <location>
        <position position="203"/>
    </location>
    <ligand>
        <name>[2Fe-2S] cluster</name>
        <dbReference type="ChEBI" id="CHEBI:190135"/>
    </ligand>
</feature>
<feature type="binding site" evidence="1">
    <location>
        <position position="454"/>
    </location>
    <ligand>
        <name>Mg(2+)</name>
        <dbReference type="ChEBI" id="CHEBI:18420"/>
    </ligand>
</feature>
<feature type="modified residue" description="N6-carboxylysine" evidence="1">
    <location>
        <position position="128"/>
    </location>
</feature>
<sequence length="564" mass="58627">MPEADIKPRSRDVTDGLEKAAARGMLRAVGMVDEDFAKAQIGVASSWNEITPCNLSLDRLAKSVKEGVFAAGGYPLEFGTISVSDGISMGHEGMHFSLVSREVIADSVETVMQAERLDGSVLLAGCDKSLPGMLMAAARLDLASVFLYAGSILPGVAKLSDGSEREVTIIDAFEAVGACSRGLMSRADVDAIERAICPGEGACGGMYTANTMASAAEALGMSLPGSAAPPATDRRRDGFARQSGQAVIELLRQGITARDIMTREAFENAIAVVMAFGGSTNAVLHLLAIAHEANVELTLDDFSRIGSKVPHLADVKPFGRHVMSHVDHIGGVPVVMKTLLDAGLLHGDCLTVTGRTVAENLEAIAPPDPDGKVLRALINPIHATGGITILRGSLAPEGAVVKTAGLDTDVFEGTARVFDGERAALDALEDGTITHGDVVVIRYEGPKGGPGMREMLAITGAIKGAGLGKDVLLLTDGRFSGGTTGFCVGHIAPEAVDAGPIAFVRDGDRIRLDVAGRTLDVLTDPPEFAARQQNFTPPAPRYKTGVLAKYVKLVGSAAIGAVCG</sequence>
<dbReference type="EC" id="4.2.1.9" evidence="1"/>
<dbReference type="EMBL" id="CP000325">
    <property type="protein sequence ID" value="ABL03673.1"/>
    <property type="molecule type" value="Genomic_DNA"/>
</dbReference>
<dbReference type="RefSeq" id="WP_011739295.1">
    <property type="nucleotide sequence ID" value="NC_008611.1"/>
</dbReference>
<dbReference type="SMR" id="A0PMV4"/>
<dbReference type="KEGG" id="mul:MUL_1082"/>
<dbReference type="eggNOG" id="COG0129">
    <property type="taxonomic scope" value="Bacteria"/>
</dbReference>
<dbReference type="HOGENOM" id="CLU_014271_4_2_11"/>
<dbReference type="UniPathway" id="UPA00047">
    <property type="reaction ID" value="UER00057"/>
</dbReference>
<dbReference type="UniPathway" id="UPA00049">
    <property type="reaction ID" value="UER00061"/>
</dbReference>
<dbReference type="Proteomes" id="UP000000765">
    <property type="component" value="Chromosome"/>
</dbReference>
<dbReference type="GO" id="GO:0051537">
    <property type="term" value="F:2 iron, 2 sulfur cluster binding"/>
    <property type="evidence" value="ECO:0007669"/>
    <property type="project" value="UniProtKB-UniRule"/>
</dbReference>
<dbReference type="GO" id="GO:0004160">
    <property type="term" value="F:dihydroxy-acid dehydratase activity"/>
    <property type="evidence" value="ECO:0007669"/>
    <property type="project" value="UniProtKB-UniRule"/>
</dbReference>
<dbReference type="GO" id="GO:0000287">
    <property type="term" value="F:magnesium ion binding"/>
    <property type="evidence" value="ECO:0007669"/>
    <property type="project" value="UniProtKB-UniRule"/>
</dbReference>
<dbReference type="GO" id="GO:0009097">
    <property type="term" value="P:isoleucine biosynthetic process"/>
    <property type="evidence" value="ECO:0007669"/>
    <property type="project" value="UniProtKB-UniRule"/>
</dbReference>
<dbReference type="GO" id="GO:0009099">
    <property type="term" value="P:L-valine biosynthetic process"/>
    <property type="evidence" value="ECO:0007669"/>
    <property type="project" value="UniProtKB-UniRule"/>
</dbReference>
<dbReference type="FunFam" id="3.50.30.80:FF:000001">
    <property type="entry name" value="Dihydroxy-acid dehydratase"/>
    <property type="match status" value="1"/>
</dbReference>
<dbReference type="Gene3D" id="3.50.30.80">
    <property type="entry name" value="IlvD/EDD C-terminal domain-like"/>
    <property type="match status" value="1"/>
</dbReference>
<dbReference type="HAMAP" id="MF_00012">
    <property type="entry name" value="IlvD"/>
    <property type="match status" value="1"/>
</dbReference>
<dbReference type="InterPro" id="IPR050165">
    <property type="entry name" value="DHAD_IlvD/Edd"/>
</dbReference>
<dbReference type="InterPro" id="IPR042096">
    <property type="entry name" value="Dihydro-acid_dehy_C"/>
</dbReference>
<dbReference type="InterPro" id="IPR004404">
    <property type="entry name" value="DihydroxyA_deHydtase"/>
</dbReference>
<dbReference type="InterPro" id="IPR020558">
    <property type="entry name" value="DiOHA_6PGluconate_deHydtase_CS"/>
</dbReference>
<dbReference type="InterPro" id="IPR056740">
    <property type="entry name" value="ILV_EDD_C"/>
</dbReference>
<dbReference type="InterPro" id="IPR000581">
    <property type="entry name" value="ILV_EDD_N"/>
</dbReference>
<dbReference type="InterPro" id="IPR037237">
    <property type="entry name" value="IlvD/EDD_N"/>
</dbReference>
<dbReference type="NCBIfam" id="TIGR00110">
    <property type="entry name" value="ilvD"/>
    <property type="match status" value="1"/>
</dbReference>
<dbReference type="NCBIfam" id="NF002068">
    <property type="entry name" value="PRK00911.1"/>
    <property type="match status" value="1"/>
</dbReference>
<dbReference type="PANTHER" id="PTHR21000">
    <property type="entry name" value="DIHYDROXY-ACID DEHYDRATASE DAD"/>
    <property type="match status" value="1"/>
</dbReference>
<dbReference type="PANTHER" id="PTHR21000:SF5">
    <property type="entry name" value="DIHYDROXY-ACID DEHYDRATASE, MITOCHONDRIAL"/>
    <property type="match status" value="1"/>
</dbReference>
<dbReference type="Pfam" id="PF24877">
    <property type="entry name" value="ILV_EDD_C"/>
    <property type="match status" value="1"/>
</dbReference>
<dbReference type="Pfam" id="PF00920">
    <property type="entry name" value="ILVD_EDD_N"/>
    <property type="match status" value="1"/>
</dbReference>
<dbReference type="SUPFAM" id="SSF143975">
    <property type="entry name" value="IlvD/EDD N-terminal domain-like"/>
    <property type="match status" value="1"/>
</dbReference>
<dbReference type="SUPFAM" id="SSF52016">
    <property type="entry name" value="LeuD/IlvD-like"/>
    <property type="match status" value="1"/>
</dbReference>
<dbReference type="PROSITE" id="PS00886">
    <property type="entry name" value="ILVD_EDD_1"/>
    <property type="match status" value="1"/>
</dbReference>
<dbReference type="PROSITE" id="PS00887">
    <property type="entry name" value="ILVD_EDD_2"/>
    <property type="match status" value="1"/>
</dbReference>
<organism>
    <name type="scientific">Mycobacterium ulcerans (strain Agy99)</name>
    <dbReference type="NCBI Taxonomy" id="362242"/>
    <lineage>
        <taxon>Bacteria</taxon>
        <taxon>Bacillati</taxon>
        <taxon>Actinomycetota</taxon>
        <taxon>Actinomycetes</taxon>
        <taxon>Mycobacteriales</taxon>
        <taxon>Mycobacteriaceae</taxon>
        <taxon>Mycobacterium</taxon>
        <taxon>Mycobacterium ulcerans group</taxon>
    </lineage>
</organism>
<name>ILVD_MYCUA</name>
<gene>
    <name evidence="1" type="primary">ilvD</name>
    <name type="ordered locus">MUL_1082</name>
</gene>
<protein>
    <recommendedName>
        <fullName evidence="1">Dihydroxy-acid dehydratase</fullName>
        <shortName evidence="1">DAD</shortName>
        <ecNumber evidence="1">4.2.1.9</ecNumber>
    </recommendedName>
</protein>
<keyword id="KW-0001">2Fe-2S</keyword>
<keyword id="KW-0028">Amino-acid biosynthesis</keyword>
<keyword id="KW-0100">Branched-chain amino acid biosynthesis</keyword>
<keyword id="KW-0408">Iron</keyword>
<keyword id="KW-0411">Iron-sulfur</keyword>
<keyword id="KW-0456">Lyase</keyword>
<keyword id="KW-0460">Magnesium</keyword>
<keyword id="KW-0479">Metal-binding</keyword>
<evidence type="ECO:0000255" key="1">
    <source>
        <dbReference type="HAMAP-Rule" id="MF_00012"/>
    </source>
</evidence>